<reference key="1">
    <citation type="journal article" date="2000" name="Nature">
        <title>DNA sequence of both chromosomes of the cholera pathogen Vibrio cholerae.</title>
        <authorList>
            <person name="Heidelberg J.F."/>
            <person name="Eisen J.A."/>
            <person name="Nelson W.C."/>
            <person name="Clayton R.A."/>
            <person name="Gwinn M.L."/>
            <person name="Dodson R.J."/>
            <person name="Haft D.H."/>
            <person name="Hickey E.K."/>
            <person name="Peterson J.D."/>
            <person name="Umayam L.A."/>
            <person name="Gill S.R."/>
            <person name="Nelson K.E."/>
            <person name="Read T.D."/>
            <person name="Tettelin H."/>
            <person name="Richardson D.L."/>
            <person name="Ermolaeva M.D."/>
            <person name="Vamathevan J.J."/>
            <person name="Bass S."/>
            <person name="Qin H."/>
            <person name="Dragoi I."/>
            <person name="Sellers P."/>
            <person name="McDonald L.A."/>
            <person name="Utterback T.R."/>
            <person name="Fleischmann R.D."/>
            <person name="Nierman W.C."/>
            <person name="White O."/>
            <person name="Salzberg S.L."/>
            <person name="Smith H.O."/>
            <person name="Colwell R.R."/>
            <person name="Mekalanos J.J."/>
            <person name="Venter J.C."/>
            <person name="Fraser C.M."/>
        </authorList>
    </citation>
    <scope>NUCLEOTIDE SEQUENCE [LARGE SCALE GENOMIC DNA]</scope>
    <source>
        <strain>ATCC 39315 / El Tor Inaba N16961</strain>
    </source>
</reference>
<name>Y510_VIBCH</name>
<dbReference type="EMBL" id="AE003852">
    <property type="protein sequence ID" value="AAF93680.1"/>
    <property type="molecule type" value="Genomic_DNA"/>
</dbReference>
<dbReference type="PIR" id="A82314">
    <property type="entry name" value="A82314"/>
</dbReference>
<dbReference type="RefSeq" id="NP_230161.1">
    <property type="nucleotide sequence ID" value="NC_002505.1"/>
</dbReference>
<dbReference type="SMR" id="Q9KUK8"/>
<dbReference type="STRING" id="243277.VC_0510"/>
<dbReference type="DNASU" id="2615802"/>
<dbReference type="EnsemblBacteria" id="AAF93680">
    <property type="protein sequence ID" value="AAF93680"/>
    <property type="gene ID" value="VC_0510"/>
</dbReference>
<dbReference type="KEGG" id="vch:VC_0510"/>
<dbReference type="PATRIC" id="fig|243277.26.peg.484"/>
<dbReference type="eggNOG" id="COG2003">
    <property type="taxonomic scope" value="Bacteria"/>
</dbReference>
<dbReference type="HOGENOM" id="CLU_073529_3_1_6"/>
<dbReference type="Proteomes" id="UP000000584">
    <property type="component" value="Chromosome 1"/>
</dbReference>
<dbReference type="GO" id="GO:0046872">
    <property type="term" value="F:metal ion binding"/>
    <property type="evidence" value="ECO:0007669"/>
    <property type="project" value="UniProtKB-KW"/>
</dbReference>
<dbReference type="GO" id="GO:0008237">
    <property type="term" value="F:metallopeptidase activity"/>
    <property type="evidence" value="ECO:0007669"/>
    <property type="project" value="UniProtKB-KW"/>
</dbReference>
<dbReference type="GO" id="GO:0006508">
    <property type="term" value="P:proteolysis"/>
    <property type="evidence" value="ECO:0007669"/>
    <property type="project" value="UniProtKB-KW"/>
</dbReference>
<dbReference type="CDD" id="cd08071">
    <property type="entry name" value="MPN_DUF2466"/>
    <property type="match status" value="1"/>
</dbReference>
<dbReference type="Gene3D" id="3.40.140.10">
    <property type="entry name" value="Cytidine Deaminase, domain 2"/>
    <property type="match status" value="1"/>
</dbReference>
<dbReference type="InterPro" id="IPR037518">
    <property type="entry name" value="MPN"/>
</dbReference>
<dbReference type="InterPro" id="IPR025657">
    <property type="entry name" value="RadC_JAB"/>
</dbReference>
<dbReference type="InterPro" id="IPR001405">
    <property type="entry name" value="UPF0758"/>
</dbReference>
<dbReference type="InterPro" id="IPR020891">
    <property type="entry name" value="UPF0758_CS"/>
</dbReference>
<dbReference type="NCBIfam" id="TIGR00608">
    <property type="entry name" value="radc"/>
    <property type="match status" value="1"/>
</dbReference>
<dbReference type="PANTHER" id="PTHR30471">
    <property type="entry name" value="DNA REPAIR PROTEIN RADC"/>
    <property type="match status" value="1"/>
</dbReference>
<dbReference type="PANTHER" id="PTHR30471:SF6">
    <property type="entry name" value="UPF0758 PROTEIN VC_0510"/>
    <property type="match status" value="1"/>
</dbReference>
<dbReference type="Pfam" id="PF04002">
    <property type="entry name" value="RadC"/>
    <property type="match status" value="1"/>
</dbReference>
<dbReference type="SUPFAM" id="SSF102712">
    <property type="entry name" value="JAB1/MPN domain"/>
    <property type="match status" value="1"/>
</dbReference>
<dbReference type="PROSITE" id="PS50249">
    <property type="entry name" value="MPN"/>
    <property type="match status" value="1"/>
</dbReference>
<dbReference type="PROSITE" id="PS01302">
    <property type="entry name" value="UPF0758"/>
    <property type="match status" value="1"/>
</dbReference>
<evidence type="ECO:0000255" key="1">
    <source>
        <dbReference type="PROSITE-ProRule" id="PRU01182"/>
    </source>
</evidence>
<evidence type="ECO:0000305" key="2"/>
<gene>
    <name type="ordered locus">VC_0510</name>
</gene>
<proteinExistence type="inferred from homology"/>
<sequence>MNPKTSEYQKQQRYQENEILEHAAEILANRYVRGDALTNPDATKEYVRCKLGSYEREVFALLLLDNQNRLIEFKELFQGTVDAASVYPREVVKAVLEVNAAAVIFAHNHPSGDSTPSQADRRITERLKDTLALVDVRVLDHIVTGDTCTSFAERGWL</sequence>
<accession>Q9KUK8</accession>
<keyword id="KW-0378">Hydrolase</keyword>
<keyword id="KW-0479">Metal-binding</keyword>
<keyword id="KW-0482">Metalloprotease</keyword>
<keyword id="KW-0645">Protease</keyword>
<keyword id="KW-1185">Reference proteome</keyword>
<keyword id="KW-0862">Zinc</keyword>
<protein>
    <recommendedName>
        <fullName>UPF0758 protein VC_0510</fullName>
    </recommendedName>
</protein>
<feature type="chain" id="PRO_0000190765" description="UPF0758 protein VC_0510">
    <location>
        <begin position="1"/>
        <end position="157"/>
    </location>
</feature>
<feature type="domain" description="MPN" evidence="1">
    <location>
        <begin position="36"/>
        <end position="157"/>
    </location>
</feature>
<feature type="short sequence motif" description="JAMM motif" evidence="1">
    <location>
        <begin position="107"/>
        <end position="120"/>
    </location>
</feature>
<feature type="binding site" evidence="1">
    <location>
        <position position="107"/>
    </location>
    <ligand>
        <name>Zn(2+)</name>
        <dbReference type="ChEBI" id="CHEBI:29105"/>
        <note>catalytic</note>
    </ligand>
</feature>
<feature type="binding site" evidence="1">
    <location>
        <position position="109"/>
    </location>
    <ligand>
        <name>Zn(2+)</name>
        <dbReference type="ChEBI" id="CHEBI:29105"/>
        <note>catalytic</note>
    </ligand>
</feature>
<feature type="binding site" evidence="1">
    <location>
        <position position="120"/>
    </location>
    <ligand>
        <name>Zn(2+)</name>
        <dbReference type="ChEBI" id="CHEBI:29105"/>
        <note>catalytic</note>
    </ligand>
</feature>
<organism>
    <name type="scientific">Vibrio cholerae serotype O1 (strain ATCC 39315 / El Tor Inaba N16961)</name>
    <dbReference type="NCBI Taxonomy" id="243277"/>
    <lineage>
        <taxon>Bacteria</taxon>
        <taxon>Pseudomonadati</taxon>
        <taxon>Pseudomonadota</taxon>
        <taxon>Gammaproteobacteria</taxon>
        <taxon>Vibrionales</taxon>
        <taxon>Vibrionaceae</taxon>
        <taxon>Vibrio</taxon>
    </lineage>
</organism>
<comment type="similarity">
    <text evidence="2">Belongs to the UPF0758 family.</text>
</comment>